<keyword id="KW-0414">Isoprene biosynthesis</keyword>
<keyword id="KW-0456">Lyase</keyword>
<keyword id="KW-0479">Metal-binding</keyword>
<keyword id="KW-0511">Multifunctional enzyme</keyword>
<keyword id="KW-0548">Nucleotidyltransferase</keyword>
<keyword id="KW-1185">Reference proteome</keyword>
<keyword id="KW-0808">Transferase</keyword>
<evidence type="ECO:0000255" key="1">
    <source>
        <dbReference type="HAMAP-Rule" id="MF_01520"/>
    </source>
</evidence>
<sequence>MSDLTLVLLGAGNSSRFGLDVKKQWLWCGNEPLWLYVTNRFTDMFPFHDVVITAHPKEIPFYKKFCHHTIVKGADTRQQSLLNALEMVKTPYVLVSDIARPCIQKEVVQKIIDNRSKAACIVPYIQPADTVVYKNETIDRNEVKLIQTPQLSSTDILRKALTQGKEFTDESSAIQALGEKVFYILGNRKQHKLTYKEDMKLLNCLQKPSATKRIGNGLDVHAFCEDRKLYLCGIEIPYDKGLAGHSDADVAIHALIDALLGAAGFGDIGELFPDSDETYKDIDSKKLLCETVRLLRACGFVIEHVDLTIVAQNPKIGPFKEKMKESLHDLLQIPYHLINLKATTTEHLGFVGRNEGIAAMATATLHYFDWSEI</sequence>
<gene>
    <name evidence="1" type="primary">ispDF</name>
    <name type="ordered locus">NIS_0595</name>
</gene>
<protein>
    <recommendedName>
        <fullName evidence="1">Bifunctional enzyme IspD/IspF</fullName>
    </recommendedName>
    <domain>
        <recommendedName>
            <fullName evidence="1">2-C-methyl-D-erythritol 4-phosphate cytidylyltransferase</fullName>
            <ecNumber evidence="1">2.7.7.60</ecNumber>
        </recommendedName>
        <alternativeName>
            <fullName evidence="1">4-diphosphocytidyl-2C-methyl-D-erythritol synthase</fullName>
        </alternativeName>
        <alternativeName>
            <fullName evidence="1">MEP cytidylyltransferase</fullName>
            <shortName evidence="1">MCT</shortName>
        </alternativeName>
    </domain>
    <domain>
        <recommendedName>
            <fullName evidence="1">2-C-methyl-D-erythritol 2,4-cyclodiphosphate synthase</fullName>
            <shortName evidence="1">MECDP-synthase</shortName>
            <shortName evidence="1">MECPP-synthase</shortName>
            <shortName evidence="1">MECPS</shortName>
            <ecNumber evidence="1">4.6.1.12</ecNumber>
        </recommendedName>
    </domain>
</protein>
<accession>A6Q2K0</accession>
<reference key="1">
    <citation type="journal article" date="2007" name="Proc. Natl. Acad. Sci. U.S.A.">
        <title>Deep-sea vent epsilon-proteobacterial genomes provide insights into emergence of pathogens.</title>
        <authorList>
            <person name="Nakagawa S."/>
            <person name="Takaki Y."/>
            <person name="Shimamura S."/>
            <person name="Reysenbach A.-L."/>
            <person name="Takai K."/>
            <person name="Horikoshi K."/>
        </authorList>
    </citation>
    <scope>NUCLEOTIDE SEQUENCE [LARGE SCALE GENOMIC DNA]</scope>
    <source>
        <strain>SB155-2</strain>
    </source>
</reference>
<feature type="chain" id="PRO_0000315553" description="Bifunctional enzyme IspD/IspF">
    <location>
        <begin position="1"/>
        <end position="373"/>
    </location>
</feature>
<feature type="region of interest" description="2-C-methyl-D-erythritol 4-phosphate cytidylyltransferase" evidence="1">
    <location>
        <begin position="1"/>
        <end position="213"/>
    </location>
</feature>
<feature type="region of interest" description="2-C-methyl-D-erythritol 2,4-cyclodiphosphate synthase" evidence="1">
    <location>
        <begin position="213"/>
        <end position="373"/>
    </location>
</feature>
<feature type="binding site" evidence="1">
    <location>
        <begin position="219"/>
        <end position="221"/>
    </location>
    <ligand>
        <name>4-CDP-2-C-methyl-D-erythritol 2-phosphate</name>
        <dbReference type="ChEBI" id="CHEBI:57919"/>
    </ligand>
</feature>
<feature type="binding site" evidence="1">
    <location>
        <position position="219"/>
    </location>
    <ligand>
        <name>a divalent metal cation</name>
        <dbReference type="ChEBI" id="CHEBI:60240"/>
    </ligand>
</feature>
<feature type="binding site" evidence="1">
    <location>
        <position position="221"/>
    </location>
    <ligand>
        <name>a divalent metal cation</name>
        <dbReference type="ChEBI" id="CHEBI:60240"/>
    </ligand>
</feature>
<feature type="binding site" evidence="1">
    <location>
        <begin position="245"/>
        <end position="246"/>
    </location>
    <ligand>
        <name>4-CDP-2-C-methyl-D-erythritol 2-phosphate</name>
        <dbReference type="ChEBI" id="CHEBI:57919"/>
    </ligand>
</feature>
<feature type="binding site" evidence="1">
    <location>
        <position position="253"/>
    </location>
    <ligand>
        <name>a divalent metal cation</name>
        <dbReference type="ChEBI" id="CHEBI:60240"/>
    </ligand>
</feature>
<feature type="binding site" evidence="1">
    <location>
        <begin position="267"/>
        <end position="269"/>
    </location>
    <ligand>
        <name>4-CDP-2-C-methyl-D-erythritol 2-phosphate</name>
        <dbReference type="ChEBI" id="CHEBI:57919"/>
    </ligand>
</feature>
<feature type="binding site" evidence="1">
    <location>
        <begin position="272"/>
        <end position="276"/>
    </location>
    <ligand>
        <name>4-CDP-2-C-methyl-D-erythritol 2-phosphate</name>
        <dbReference type="ChEBI" id="CHEBI:57919"/>
    </ligand>
</feature>
<feature type="binding site" evidence="1">
    <location>
        <begin position="343"/>
        <end position="346"/>
    </location>
    <ligand>
        <name>4-CDP-2-C-methyl-D-erythritol 2-phosphate</name>
        <dbReference type="ChEBI" id="CHEBI:57919"/>
    </ligand>
</feature>
<feature type="binding site" evidence="1">
    <location>
        <position position="350"/>
    </location>
    <ligand>
        <name>4-CDP-2-C-methyl-D-erythritol 2-phosphate</name>
        <dbReference type="ChEBI" id="CHEBI:57919"/>
    </ligand>
</feature>
<feature type="binding site" evidence="1">
    <location>
        <position position="353"/>
    </location>
    <ligand>
        <name>4-CDP-2-C-methyl-D-erythritol 2-phosphate</name>
        <dbReference type="ChEBI" id="CHEBI:57919"/>
    </ligand>
</feature>
<feature type="site" description="Transition state stabilizer" evidence="1">
    <location>
        <position position="16"/>
    </location>
</feature>
<feature type="site" description="Transition state stabilizer" evidence="1">
    <location>
        <position position="23"/>
    </location>
</feature>
<feature type="site" description="Positions MEP for the nucleophilic attack" evidence="1">
    <location>
        <position position="140"/>
    </location>
</feature>
<feature type="site" description="Positions MEP for the nucleophilic attack" evidence="1">
    <location>
        <position position="192"/>
    </location>
</feature>
<feature type="site" description="Transition state stabilizer" evidence="1">
    <location>
        <position position="245"/>
    </location>
</feature>
<feature type="site" description="Transition state stabilizer" evidence="1">
    <location>
        <position position="344"/>
    </location>
</feature>
<proteinExistence type="inferred from homology"/>
<comment type="function">
    <text evidence="1">Bifunctional enzyme that catalyzes the formation of 4-diphosphocytidyl-2-C-methyl-D-erythritol from CTP and 2-C-methyl-D-erythritol 4-phosphate (MEP) (IspD), and catalyzes the conversion of 4-diphosphocytidyl-2-C-methyl-D-erythritol 2-phosphate (CDP-ME2P) to 2-C-methyl-D-erythritol 2,4-cyclodiphosphate (ME-CPP) with a corresponding release of cytidine 5-monophosphate (CMP) (IspF).</text>
</comment>
<comment type="catalytic activity">
    <reaction evidence="1">
        <text>2-C-methyl-D-erythritol 4-phosphate + CTP + H(+) = 4-CDP-2-C-methyl-D-erythritol + diphosphate</text>
        <dbReference type="Rhea" id="RHEA:13429"/>
        <dbReference type="ChEBI" id="CHEBI:15378"/>
        <dbReference type="ChEBI" id="CHEBI:33019"/>
        <dbReference type="ChEBI" id="CHEBI:37563"/>
        <dbReference type="ChEBI" id="CHEBI:57823"/>
        <dbReference type="ChEBI" id="CHEBI:58262"/>
        <dbReference type="EC" id="2.7.7.60"/>
    </reaction>
</comment>
<comment type="catalytic activity">
    <reaction evidence="1">
        <text>4-CDP-2-C-methyl-D-erythritol 2-phosphate = 2-C-methyl-D-erythritol 2,4-cyclic diphosphate + CMP</text>
        <dbReference type="Rhea" id="RHEA:23864"/>
        <dbReference type="ChEBI" id="CHEBI:57919"/>
        <dbReference type="ChEBI" id="CHEBI:58483"/>
        <dbReference type="ChEBI" id="CHEBI:60377"/>
        <dbReference type="EC" id="4.6.1.12"/>
    </reaction>
</comment>
<comment type="cofactor">
    <cofactor evidence="1">
        <name>a divalent metal cation</name>
        <dbReference type="ChEBI" id="CHEBI:60240"/>
    </cofactor>
</comment>
<comment type="pathway">
    <text evidence="1">Isoprenoid biosynthesis; isopentenyl diphosphate biosynthesis via DXP pathway; isopentenyl diphosphate from 1-deoxy-D-xylulose 5-phosphate: step 2/6.</text>
</comment>
<comment type="pathway">
    <text evidence="1">Isoprenoid biosynthesis; isopentenyl diphosphate biosynthesis via DXP pathway; isopentenyl diphosphate from 1-deoxy-D-xylulose 5-phosphate: step 4/6.</text>
</comment>
<comment type="similarity">
    <text evidence="1">In the N-terminal section; belongs to the IspD/TarI cytidylyltransferase family. IspD subfamily.</text>
</comment>
<comment type="similarity">
    <text evidence="1">In the C-terminal section; belongs to the IspF family.</text>
</comment>
<dbReference type="EC" id="2.7.7.60" evidence="1"/>
<dbReference type="EC" id="4.6.1.12" evidence="1"/>
<dbReference type="EMBL" id="AP009178">
    <property type="protein sequence ID" value="BAF69709.1"/>
    <property type="molecule type" value="Genomic_DNA"/>
</dbReference>
<dbReference type="RefSeq" id="WP_012081972.1">
    <property type="nucleotide sequence ID" value="NC_009662.1"/>
</dbReference>
<dbReference type="SMR" id="A6Q2K0"/>
<dbReference type="FunCoup" id="A6Q2K0">
    <property type="interactions" value="436"/>
</dbReference>
<dbReference type="STRING" id="387092.NIS_0595"/>
<dbReference type="KEGG" id="nis:NIS_0595"/>
<dbReference type="eggNOG" id="COG0245">
    <property type="taxonomic scope" value="Bacteria"/>
</dbReference>
<dbReference type="eggNOG" id="COG1211">
    <property type="taxonomic scope" value="Bacteria"/>
</dbReference>
<dbReference type="HOGENOM" id="CLU_042800_2_6_7"/>
<dbReference type="InParanoid" id="A6Q2K0"/>
<dbReference type="OrthoDB" id="9804336at2"/>
<dbReference type="UniPathway" id="UPA00056">
    <property type="reaction ID" value="UER00093"/>
</dbReference>
<dbReference type="UniPathway" id="UPA00056">
    <property type="reaction ID" value="UER00095"/>
</dbReference>
<dbReference type="Proteomes" id="UP000001118">
    <property type="component" value="Chromosome"/>
</dbReference>
<dbReference type="GO" id="GO:0008685">
    <property type="term" value="F:2-C-methyl-D-erythritol 2,4-cyclodiphosphate synthase activity"/>
    <property type="evidence" value="ECO:0007669"/>
    <property type="project" value="UniProtKB-UniRule"/>
</dbReference>
<dbReference type="GO" id="GO:0050518">
    <property type="term" value="F:2-C-methyl-D-erythritol 4-phosphate cytidylyltransferase activity"/>
    <property type="evidence" value="ECO:0007669"/>
    <property type="project" value="UniProtKB-UniRule"/>
</dbReference>
<dbReference type="GO" id="GO:0046872">
    <property type="term" value="F:metal ion binding"/>
    <property type="evidence" value="ECO:0007669"/>
    <property type="project" value="UniProtKB-KW"/>
</dbReference>
<dbReference type="GO" id="GO:0019288">
    <property type="term" value="P:isopentenyl diphosphate biosynthetic process, methylerythritol 4-phosphate pathway"/>
    <property type="evidence" value="ECO:0007669"/>
    <property type="project" value="UniProtKB-UniRule"/>
</dbReference>
<dbReference type="GO" id="GO:0016114">
    <property type="term" value="P:terpenoid biosynthetic process"/>
    <property type="evidence" value="ECO:0007669"/>
    <property type="project" value="InterPro"/>
</dbReference>
<dbReference type="CDD" id="cd02516">
    <property type="entry name" value="CDP-ME_synthetase"/>
    <property type="match status" value="1"/>
</dbReference>
<dbReference type="CDD" id="cd00554">
    <property type="entry name" value="MECDP_synthase"/>
    <property type="match status" value="1"/>
</dbReference>
<dbReference type="FunFam" id="3.30.1330.50:FF:000003">
    <property type="entry name" value="2-C-methyl-D-erythritol 2,4-cyclodiphosphate synthase"/>
    <property type="match status" value="1"/>
</dbReference>
<dbReference type="Gene3D" id="3.30.1330.50">
    <property type="entry name" value="2-C-methyl-D-erythritol 2,4-cyclodiphosphate synthase"/>
    <property type="match status" value="1"/>
</dbReference>
<dbReference type="Gene3D" id="3.90.550.10">
    <property type="entry name" value="Spore Coat Polysaccharide Biosynthesis Protein SpsA, Chain A"/>
    <property type="match status" value="1"/>
</dbReference>
<dbReference type="HAMAP" id="MF_01520">
    <property type="entry name" value="IspDF"/>
    <property type="match status" value="1"/>
</dbReference>
<dbReference type="HAMAP" id="MF_00107">
    <property type="entry name" value="IspF"/>
    <property type="match status" value="1"/>
</dbReference>
<dbReference type="InterPro" id="IPR001228">
    <property type="entry name" value="IspD"/>
</dbReference>
<dbReference type="InterPro" id="IPR026596">
    <property type="entry name" value="IspD/F"/>
</dbReference>
<dbReference type="InterPro" id="IPR034683">
    <property type="entry name" value="IspD/TarI"/>
</dbReference>
<dbReference type="InterPro" id="IPR003526">
    <property type="entry name" value="MECDP_synthase"/>
</dbReference>
<dbReference type="InterPro" id="IPR020555">
    <property type="entry name" value="MECDP_synthase_CS"/>
</dbReference>
<dbReference type="InterPro" id="IPR036571">
    <property type="entry name" value="MECDP_synthase_sf"/>
</dbReference>
<dbReference type="InterPro" id="IPR029044">
    <property type="entry name" value="Nucleotide-diphossugar_trans"/>
</dbReference>
<dbReference type="NCBIfam" id="TIGR00453">
    <property type="entry name" value="ispD"/>
    <property type="match status" value="1"/>
</dbReference>
<dbReference type="NCBIfam" id="TIGR00151">
    <property type="entry name" value="ispF"/>
    <property type="match status" value="1"/>
</dbReference>
<dbReference type="NCBIfam" id="NF006899">
    <property type="entry name" value="PRK09382.1"/>
    <property type="match status" value="1"/>
</dbReference>
<dbReference type="PANTHER" id="PTHR43181">
    <property type="entry name" value="2-C-METHYL-D-ERYTHRITOL 2,4-CYCLODIPHOSPHATE SYNTHASE, CHLOROPLASTIC"/>
    <property type="match status" value="1"/>
</dbReference>
<dbReference type="PANTHER" id="PTHR43181:SF1">
    <property type="entry name" value="2-C-METHYL-D-ERYTHRITOL 2,4-CYCLODIPHOSPHATE SYNTHASE, CHLOROPLASTIC"/>
    <property type="match status" value="1"/>
</dbReference>
<dbReference type="Pfam" id="PF01128">
    <property type="entry name" value="IspD"/>
    <property type="match status" value="1"/>
</dbReference>
<dbReference type="Pfam" id="PF02542">
    <property type="entry name" value="YgbB"/>
    <property type="match status" value="1"/>
</dbReference>
<dbReference type="SUPFAM" id="SSF69765">
    <property type="entry name" value="IpsF-like"/>
    <property type="match status" value="1"/>
</dbReference>
<dbReference type="SUPFAM" id="SSF53448">
    <property type="entry name" value="Nucleotide-diphospho-sugar transferases"/>
    <property type="match status" value="1"/>
</dbReference>
<dbReference type="PROSITE" id="PS01350">
    <property type="entry name" value="ISPF"/>
    <property type="match status" value="1"/>
</dbReference>
<name>ISPDF_NITSB</name>
<organism>
    <name type="scientific">Nitratiruptor sp. (strain SB155-2)</name>
    <dbReference type="NCBI Taxonomy" id="387092"/>
    <lineage>
        <taxon>Bacteria</taxon>
        <taxon>Pseudomonadati</taxon>
        <taxon>Campylobacterota</taxon>
        <taxon>Epsilonproteobacteria</taxon>
        <taxon>Nautiliales</taxon>
        <taxon>Nitratiruptoraceae</taxon>
        <taxon>Nitratiruptor</taxon>
    </lineage>
</organism>